<comment type="function">
    <text evidence="1">Catalyzes the conversion of 4-hydroxy-tetrahydrodipicolinate (HTPA) to tetrahydrodipicolinate.</text>
</comment>
<comment type="catalytic activity">
    <reaction evidence="1">
        <text>(S)-2,3,4,5-tetrahydrodipicolinate + NAD(+) + H2O = (2S,4S)-4-hydroxy-2,3,4,5-tetrahydrodipicolinate + NADH + H(+)</text>
        <dbReference type="Rhea" id="RHEA:35323"/>
        <dbReference type="ChEBI" id="CHEBI:15377"/>
        <dbReference type="ChEBI" id="CHEBI:15378"/>
        <dbReference type="ChEBI" id="CHEBI:16845"/>
        <dbReference type="ChEBI" id="CHEBI:57540"/>
        <dbReference type="ChEBI" id="CHEBI:57945"/>
        <dbReference type="ChEBI" id="CHEBI:67139"/>
        <dbReference type="EC" id="1.17.1.8"/>
    </reaction>
</comment>
<comment type="catalytic activity">
    <reaction evidence="1">
        <text>(S)-2,3,4,5-tetrahydrodipicolinate + NADP(+) + H2O = (2S,4S)-4-hydroxy-2,3,4,5-tetrahydrodipicolinate + NADPH + H(+)</text>
        <dbReference type="Rhea" id="RHEA:35331"/>
        <dbReference type="ChEBI" id="CHEBI:15377"/>
        <dbReference type="ChEBI" id="CHEBI:15378"/>
        <dbReference type="ChEBI" id="CHEBI:16845"/>
        <dbReference type="ChEBI" id="CHEBI:57783"/>
        <dbReference type="ChEBI" id="CHEBI:58349"/>
        <dbReference type="ChEBI" id="CHEBI:67139"/>
        <dbReference type="EC" id="1.17.1.8"/>
    </reaction>
</comment>
<comment type="pathway">
    <text evidence="1">Amino-acid biosynthesis; L-lysine biosynthesis via DAP pathway; (S)-tetrahydrodipicolinate from L-aspartate: step 4/4.</text>
</comment>
<comment type="subcellular location">
    <subcellularLocation>
        <location evidence="1">Cytoplasm</location>
    </subcellularLocation>
</comment>
<comment type="similarity">
    <text evidence="1">Belongs to the DapB family.</text>
</comment>
<comment type="caution">
    <text evidence="2">Was originally thought to be a dihydrodipicolinate reductase (DHDPR), catalyzing the conversion of dihydrodipicolinate to tetrahydrodipicolinate. However, it was shown in E.coli that the substrate of the enzymatic reaction is not dihydrodipicolinate (DHDP) but in fact (2S,4S)-4-hydroxy-2,3,4,5-tetrahydrodipicolinic acid (HTPA), the product released by the DapA-catalyzed reaction.</text>
</comment>
<reference key="1">
    <citation type="journal article" date="2002" name="Genome Res.">
        <title>A complete sequence of the T. tengcongensis genome.</title>
        <authorList>
            <person name="Bao Q."/>
            <person name="Tian Y."/>
            <person name="Li W."/>
            <person name="Xu Z."/>
            <person name="Xuan Z."/>
            <person name="Hu S."/>
            <person name="Dong W."/>
            <person name="Yang J."/>
            <person name="Chen Y."/>
            <person name="Xue Y."/>
            <person name="Xu Y."/>
            <person name="Lai X."/>
            <person name="Huang L."/>
            <person name="Dong X."/>
            <person name="Ma Y."/>
            <person name="Ling L."/>
            <person name="Tan H."/>
            <person name="Chen R."/>
            <person name="Wang J."/>
            <person name="Yu J."/>
            <person name="Yang H."/>
        </authorList>
    </citation>
    <scope>NUCLEOTIDE SEQUENCE [LARGE SCALE GENOMIC DNA]</scope>
    <source>
        <strain>DSM 15242 / JCM 11007 / NBRC 100824 / MB4</strain>
    </source>
</reference>
<feature type="chain" id="PRO_0000141503" description="4-hydroxy-tetrahydrodipicolinate reductase">
    <location>
        <begin position="1"/>
        <end position="251"/>
    </location>
</feature>
<feature type="active site" description="Proton donor/acceptor" evidence="1">
    <location>
        <position position="141"/>
    </location>
</feature>
<feature type="active site" description="Proton donor" evidence="1">
    <location>
        <position position="145"/>
    </location>
</feature>
<feature type="binding site" evidence="1">
    <location>
        <begin position="9"/>
        <end position="14"/>
    </location>
    <ligand>
        <name>NAD(+)</name>
        <dbReference type="ChEBI" id="CHEBI:57540"/>
    </ligand>
</feature>
<feature type="binding site" evidence="1">
    <location>
        <begin position="85"/>
        <end position="87"/>
    </location>
    <ligand>
        <name>NAD(+)</name>
        <dbReference type="ChEBI" id="CHEBI:57540"/>
    </ligand>
</feature>
<feature type="binding site" evidence="1">
    <location>
        <begin position="109"/>
        <end position="112"/>
    </location>
    <ligand>
        <name>NAD(+)</name>
        <dbReference type="ChEBI" id="CHEBI:57540"/>
    </ligand>
</feature>
<feature type="binding site" evidence="1">
    <location>
        <position position="142"/>
    </location>
    <ligand>
        <name>(S)-2,3,4,5-tetrahydrodipicolinate</name>
        <dbReference type="ChEBI" id="CHEBI:16845"/>
    </ligand>
</feature>
<feature type="binding site" evidence="1">
    <location>
        <begin position="151"/>
        <end position="152"/>
    </location>
    <ligand>
        <name>(S)-2,3,4,5-tetrahydrodipicolinate</name>
        <dbReference type="ChEBI" id="CHEBI:16845"/>
    </ligand>
</feature>
<organism>
    <name type="scientific">Caldanaerobacter subterraneus subsp. tengcongensis (strain DSM 15242 / JCM 11007 / NBRC 100824 / MB4)</name>
    <name type="common">Thermoanaerobacter tengcongensis</name>
    <dbReference type="NCBI Taxonomy" id="273068"/>
    <lineage>
        <taxon>Bacteria</taxon>
        <taxon>Bacillati</taxon>
        <taxon>Bacillota</taxon>
        <taxon>Clostridia</taxon>
        <taxon>Thermoanaerobacterales</taxon>
        <taxon>Thermoanaerobacteraceae</taxon>
        <taxon>Caldanaerobacter</taxon>
    </lineage>
</organism>
<gene>
    <name evidence="1" type="primary">dapB</name>
    <name type="ordered locus">TTE0831</name>
</gene>
<evidence type="ECO:0000255" key="1">
    <source>
        <dbReference type="HAMAP-Rule" id="MF_00102"/>
    </source>
</evidence>
<evidence type="ECO:0000305" key="2"/>
<dbReference type="EC" id="1.17.1.8" evidence="1"/>
<dbReference type="EMBL" id="AE008691">
    <property type="protein sequence ID" value="AAM24088.1"/>
    <property type="molecule type" value="Genomic_DNA"/>
</dbReference>
<dbReference type="SMR" id="Q8RBI6"/>
<dbReference type="STRING" id="273068.TTE0831"/>
<dbReference type="KEGG" id="tte:TTE0831"/>
<dbReference type="eggNOG" id="COG0289">
    <property type="taxonomic scope" value="Bacteria"/>
</dbReference>
<dbReference type="HOGENOM" id="CLU_047479_2_2_9"/>
<dbReference type="UniPathway" id="UPA00034">
    <property type="reaction ID" value="UER00018"/>
</dbReference>
<dbReference type="Proteomes" id="UP000000555">
    <property type="component" value="Chromosome"/>
</dbReference>
<dbReference type="GO" id="GO:0005829">
    <property type="term" value="C:cytosol"/>
    <property type="evidence" value="ECO:0007669"/>
    <property type="project" value="TreeGrafter"/>
</dbReference>
<dbReference type="GO" id="GO:0008839">
    <property type="term" value="F:4-hydroxy-tetrahydrodipicolinate reductase"/>
    <property type="evidence" value="ECO:0007669"/>
    <property type="project" value="UniProtKB-EC"/>
</dbReference>
<dbReference type="GO" id="GO:0051287">
    <property type="term" value="F:NAD binding"/>
    <property type="evidence" value="ECO:0007669"/>
    <property type="project" value="UniProtKB-UniRule"/>
</dbReference>
<dbReference type="GO" id="GO:0050661">
    <property type="term" value="F:NADP binding"/>
    <property type="evidence" value="ECO:0007669"/>
    <property type="project" value="UniProtKB-UniRule"/>
</dbReference>
<dbReference type="GO" id="GO:0016726">
    <property type="term" value="F:oxidoreductase activity, acting on CH or CH2 groups, NAD or NADP as acceptor"/>
    <property type="evidence" value="ECO:0007669"/>
    <property type="project" value="UniProtKB-UniRule"/>
</dbReference>
<dbReference type="GO" id="GO:0019877">
    <property type="term" value="P:diaminopimelate biosynthetic process"/>
    <property type="evidence" value="ECO:0007669"/>
    <property type="project" value="UniProtKB-UniRule"/>
</dbReference>
<dbReference type="GO" id="GO:0009089">
    <property type="term" value="P:lysine biosynthetic process via diaminopimelate"/>
    <property type="evidence" value="ECO:0007669"/>
    <property type="project" value="UniProtKB-UniRule"/>
</dbReference>
<dbReference type="CDD" id="cd02274">
    <property type="entry name" value="DHDPR_N"/>
    <property type="match status" value="1"/>
</dbReference>
<dbReference type="FunFam" id="3.30.360.10:FF:000009">
    <property type="entry name" value="4-hydroxy-tetrahydrodipicolinate reductase"/>
    <property type="match status" value="1"/>
</dbReference>
<dbReference type="Gene3D" id="3.30.360.10">
    <property type="entry name" value="Dihydrodipicolinate Reductase, domain 2"/>
    <property type="match status" value="1"/>
</dbReference>
<dbReference type="Gene3D" id="3.40.50.720">
    <property type="entry name" value="NAD(P)-binding Rossmann-like Domain"/>
    <property type="match status" value="1"/>
</dbReference>
<dbReference type="HAMAP" id="MF_00102">
    <property type="entry name" value="DapB"/>
    <property type="match status" value="1"/>
</dbReference>
<dbReference type="InterPro" id="IPR022663">
    <property type="entry name" value="DapB_C"/>
</dbReference>
<dbReference type="InterPro" id="IPR000846">
    <property type="entry name" value="DapB_N"/>
</dbReference>
<dbReference type="InterPro" id="IPR022664">
    <property type="entry name" value="DapB_N_CS"/>
</dbReference>
<dbReference type="InterPro" id="IPR023940">
    <property type="entry name" value="DHDPR_bac"/>
</dbReference>
<dbReference type="InterPro" id="IPR036291">
    <property type="entry name" value="NAD(P)-bd_dom_sf"/>
</dbReference>
<dbReference type="NCBIfam" id="TIGR00036">
    <property type="entry name" value="dapB"/>
    <property type="match status" value="1"/>
</dbReference>
<dbReference type="PANTHER" id="PTHR20836:SF7">
    <property type="entry name" value="4-HYDROXY-TETRAHYDRODIPICOLINATE REDUCTASE"/>
    <property type="match status" value="1"/>
</dbReference>
<dbReference type="PANTHER" id="PTHR20836">
    <property type="entry name" value="DIHYDRODIPICOLINATE REDUCTASE"/>
    <property type="match status" value="1"/>
</dbReference>
<dbReference type="Pfam" id="PF05173">
    <property type="entry name" value="DapB_C"/>
    <property type="match status" value="1"/>
</dbReference>
<dbReference type="Pfam" id="PF01113">
    <property type="entry name" value="DapB_N"/>
    <property type="match status" value="1"/>
</dbReference>
<dbReference type="PIRSF" id="PIRSF000161">
    <property type="entry name" value="DHPR"/>
    <property type="match status" value="1"/>
</dbReference>
<dbReference type="SUPFAM" id="SSF55347">
    <property type="entry name" value="Glyceraldehyde-3-phosphate dehydrogenase-like, C-terminal domain"/>
    <property type="match status" value="1"/>
</dbReference>
<dbReference type="SUPFAM" id="SSF51735">
    <property type="entry name" value="NAD(P)-binding Rossmann-fold domains"/>
    <property type="match status" value="1"/>
</dbReference>
<dbReference type="PROSITE" id="PS01298">
    <property type="entry name" value="DAPB"/>
    <property type="match status" value="1"/>
</dbReference>
<protein>
    <recommendedName>
        <fullName evidence="1">4-hydroxy-tetrahydrodipicolinate reductase</fullName>
        <shortName evidence="1">HTPA reductase</shortName>
        <ecNumber evidence="1">1.17.1.8</ecNumber>
    </recommendedName>
</protein>
<keyword id="KW-0028">Amino-acid biosynthesis</keyword>
<keyword id="KW-0963">Cytoplasm</keyword>
<keyword id="KW-0220">Diaminopimelate biosynthesis</keyword>
<keyword id="KW-0457">Lysine biosynthesis</keyword>
<keyword id="KW-0520">NAD</keyword>
<keyword id="KW-0521">NADP</keyword>
<keyword id="KW-0560">Oxidoreductase</keyword>
<keyword id="KW-1185">Reference proteome</keyword>
<sequence length="251" mass="27658">MMIRLIIHGCNGKMGKVVAKLAKENPEFEVVAGVDKNTFPLDFPVYSDLKEVKEEADVVIDFSYHEAIPNLVKEAAKRKIPVVIATTGLSEEELKTVEEASKEIPIFRSANMSLGINVLISLVKEAAKVLEGFDIEIVEKHHNMKKDAPSGTALMIADAINQVLPEKREYVYGRYTKTEQRKPNEIGIHAVRGGTIVGEHDVIFAGPNEVITISHSAQSREVFGYGALKAAKFLIGQKPGLYTMEDLVKKG</sequence>
<accession>Q8RBI6</accession>
<name>DAPB_CALS4</name>
<proteinExistence type="inferred from homology"/>